<reference key="1">
    <citation type="journal article" date="2004" name="Nat. Genet.">
        <title>Complete sequencing and characterization of 21,243 full-length human cDNAs.</title>
        <authorList>
            <person name="Ota T."/>
            <person name="Suzuki Y."/>
            <person name="Nishikawa T."/>
            <person name="Otsuki T."/>
            <person name="Sugiyama T."/>
            <person name="Irie R."/>
            <person name="Wakamatsu A."/>
            <person name="Hayashi K."/>
            <person name="Sato H."/>
            <person name="Nagai K."/>
            <person name="Kimura K."/>
            <person name="Makita H."/>
            <person name="Sekine M."/>
            <person name="Obayashi M."/>
            <person name="Nishi T."/>
            <person name="Shibahara T."/>
            <person name="Tanaka T."/>
            <person name="Ishii S."/>
            <person name="Yamamoto J."/>
            <person name="Saito K."/>
            <person name="Kawai Y."/>
            <person name="Isono Y."/>
            <person name="Nakamura Y."/>
            <person name="Nagahari K."/>
            <person name="Murakami K."/>
            <person name="Yasuda T."/>
            <person name="Iwayanagi T."/>
            <person name="Wagatsuma M."/>
            <person name="Shiratori A."/>
            <person name="Sudo H."/>
            <person name="Hosoiri T."/>
            <person name="Kaku Y."/>
            <person name="Kodaira H."/>
            <person name="Kondo H."/>
            <person name="Sugawara M."/>
            <person name="Takahashi M."/>
            <person name="Kanda K."/>
            <person name="Yokoi T."/>
            <person name="Furuya T."/>
            <person name="Kikkawa E."/>
            <person name="Omura Y."/>
            <person name="Abe K."/>
            <person name="Kamihara K."/>
            <person name="Katsuta N."/>
            <person name="Sato K."/>
            <person name="Tanikawa M."/>
            <person name="Yamazaki M."/>
            <person name="Ninomiya K."/>
            <person name="Ishibashi T."/>
            <person name="Yamashita H."/>
            <person name="Murakawa K."/>
            <person name="Fujimori K."/>
            <person name="Tanai H."/>
            <person name="Kimata M."/>
            <person name="Watanabe M."/>
            <person name="Hiraoka S."/>
            <person name="Chiba Y."/>
            <person name="Ishida S."/>
            <person name="Ono Y."/>
            <person name="Takiguchi S."/>
            <person name="Watanabe S."/>
            <person name="Yosida M."/>
            <person name="Hotuta T."/>
            <person name="Kusano J."/>
            <person name="Kanehori K."/>
            <person name="Takahashi-Fujii A."/>
            <person name="Hara H."/>
            <person name="Tanase T.-O."/>
            <person name="Nomura Y."/>
            <person name="Togiya S."/>
            <person name="Komai F."/>
            <person name="Hara R."/>
            <person name="Takeuchi K."/>
            <person name="Arita M."/>
            <person name="Imose N."/>
            <person name="Musashino K."/>
            <person name="Yuuki H."/>
            <person name="Oshima A."/>
            <person name="Sasaki N."/>
            <person name="Aotsuka S."/>
            <person name="Yoshikawa Y."/>
            <person name="Matsunawa H."/>
            <person name="Ichihara T."/>
            <person name="Shiohata N."/>
            <person name="Sano S."/>
            <person name="Moriya S."/>
            <person name="Momiyama H."/>
            <person name="Satoh N."/>
            <person name="Takami S."/>
            <person name="Terashima Y."/>
            <person name="Suzuki O."/>
            <person name="Nakagawa S."/>
            <person name="Senoh A."/>
            <person name="Mizoguchi H."/>
            <person name="Goto Y."/>
            <person name="Shimizu F."/>
            <person name="Wakebe H."/>
            <person name="Hishigaki H."/>
            <person name="Watanabe T."/>
            <person name="Sugiyama A."/>
            <person name="Takemoto M."/>
            <person name="Kawakami B."/>
            <person name="Yamazaki M."/>
            <person name="Watanabe K."/>
            <person name="Kumagai A."/>
            <person name="Itakura S."/>
            <person name="Fukuzumi Y."/>
            <person name="Fujimori Y."/>
            <person name="Komiyama M."/>
            <person name="Tashiro H."/>
            <person name="Tanigami A."/>
            <person name="Fujiwara T."/>
            <person name="Ono T."/>
            <person name="Yamada K."/>
            <person name="Fujii Y."/>
            <person name="Ozaki K."/>
            <person name="Hirao M."/>
            <person name="Ohmori Y."/>
            <person name="Kawabata A."/>
            <person name="Hikiji T."/>
            <person name="Kobatake N."/>
            <person name="Inagaki H."/>
            <person name="Ikema Y."/>
            <person name="Okamoto S."/>
            <person name="Okitani R."/>
            <person name="Kawakami T."/>
            <person name="Noguchi S."/>
            <person name="Itoh T."/>
            <person name="Shigeta K."/>
            <person name="Senba T."/>
            <person name="Matsumura K."/>
            <person name="Nakajima Y."/>
            <person name="Mizuno T."/>
            <person name="Morinaga M."/>
            <person name="Sasaki M."/>
            <person name="Togashi T."/>
            <person name="Oyama M."/>
            <person name="Hata H."/>
            <person name="Watanabe M."/>
            <person name="Komatsu T."/>
            <person name="Mizushima-Sugano J."/>
            <person name="Satoh T."/>
            <person name="Shirai Y."/>
            <person name="Takahashi Y."/>
            <person name="Nakagawa K."/>
            <person name="Okumura K."/>
            <person name="Nagase T."/>
            <person name="Nomura N."/>
            <person name="Kikuchi H."/>
            <person name="Masuho Y."/>
            <person name="Yamashita R."/>
            <person name="Nakai K."/>
            <person name="Yada T."/>
            <person name="Nakamura Y."/>
            <person name="Ohara O."/>
            <person name="Isogai T."/>
            <person name="Sugano S."/>
        </authorList>
    </citation>
    <scope>NUCLEOTIDE SEQUENCE [LARGE SCALE MRNA] (ISOFORM 3)</scope>
    <source>
        <tissue>Brain</tissue>
    </source>
</reference>
<reference key="2">
    <citation type="journal article" date="2004" name="Nature">
        <title>The DNA sequence and comparative analysis of human chromosome 5.</title>
        <authorList>
            <person name="Schmutz J."/>
            <person name="Martin J."/>
            <person name="Terry A."/>
            <person name="Couronne O."/>
            <person name="Grimwood J."/>
            <person name="Lowry S."/>
            <person name="Gordon L.A."/>
            <person name="Scott D."/>
            <person name="Xie G."/>
            <person name="Huang W."/>
            <person name="Hellsten U."/>
            <person name="Tran-Gyamfi M."/>
            <person name="She X."/>
            <person name="Prabhakar S."/>
            <person name="Aerts A."/>
            <person name="Altherr M."/>
            <person name="Bajorek E."/>
            <person name="Black S."/>
            <person name="Branscomb E."/>
            <person name="Caoile C."/>
            <person name="Challacombe J.F."/>
            <person name="Chan Y.M."/>
            <person name="Denys M."/>
            <person name="Detter J.C."/>
            <person name="Escobar J."/>
            <person name="Flowers D."/>
            <person name="Fotopulos D."/>
            <person name="Glavina T."/>
            <person name="Gomez M."/>
            <person name="Gonzales E."/>
            <person name="Goodstein D."/>
            <person name="Grigoriev I."/>
            <person name="Groza M."/>
            <person name="Hammon N."/>
            <person name="Hawkins T."/>
            <person name="Haydu L."/>
            <person name="Israni S."/>
            <person name="Jett J."/>
            <person name="Kadner K."/>
            <person name="Kimball H."/>
            <person name="Kobayashi A."/>
            <person name="Lopez F."/>
            <person name="Lou Y."/>
            <person name="Martinez D."/>
            <person name="Medina C."/>
            <person name="Morgan J."/>
            <person name="Nandkeshwar R."/>
            <person name="Noonan J.P."/>
            <person name="Pitluck S."/>
            <person name="Pollard M."/>
            <person name="Predki P."/>
            <person name="Priest J."/>
            <person name="Ramirez L."/>
            <person name="Retterer J."/>
            <person name="Rodriguez A."/>
            <person name="Rogers S."/>
            <person name="Salamov A."/>
            <person name="Salazar A."/>
            <person name="Thayer N."/>
            <person name="Tice H."/>
            <person name="Tsai M."/>
            <person name="Ustaszewska A."/>
            <person name="Vo N."/>
            <person name="Wheeler J."/>
            <person name="Wu K."/>
            <person name="Yang J."/>
            <person name="Dickson M."/>
            <person name="Cheng J.-F."/>
            <person name="Eichler E.E."/>
            <person name="Olsen A."/>
            <person name="Pennacchio L.A."/>
            <person name="Rokhsar D.S."/>
            <person name="Richardson P."/>
            <person name="Lucas S.M."/>
            <person name="Myers R.M."/>
            <person name="Rubin E.M."/>
        </authorList>
    </citation>
    <scope>NUCLEOTIDE SEQUENCE [LARGE SCALE GENOMIC DNA]</scope>
</reference>
<reference key="3">
    <citation type="journal article" date="2004" name="Genome Res.">
        <title>The status, quality, and expansion of the NIH full-length cDNA project: the Mammalian Gene Collection (MGC).</title>
        <authorList>
            <consortium name="The MGC Project Team"/>
        </authorList>
    </citation>
    <scope>NUCLEOTIDE SEQUENCE [LARGE SCALE MRNA] (ISOFORM 3)</scope>
    <scope>NUCLEOTIDE SEQUENCE [LARGE SCALE MRNA] OF 39-442 (ISOFORM 1)</scope>
    <source>
        <tissue>Brain</tissue>
    </source>
</reference>
<reference key="4">
    <citation type="submission" date="2003-08" db="EMBL/GenBank/DDBJ databases">
        <authorList>
            <person name="Li H."/>
            <person name="Yu R."/>
            <person name="Zhou G."/>
            <person name="Shen C."/>
            <person name="Xiao W."/>
            <person name="Li M."/>
            <person name="Ke R."/>
            <person name="Zhong G."/>
            <person name="Lin L."/>
            <person name="Yang S."/>
        </authorList>
    </citation>
    <scope>NUCLEOTIDE SEQUENCE [LARGE SCALE MRNA] OF 164-442 (ISOFORM 2)</scope>
</reference>
<reference key="5">
    <citation type="journal article" date="2011" name="BMC Syst. Biol.">
        <title>Initial characterization of the human central proteome.</title>
        <authorList>
            <person name="Burkard T.R."/>
            <person name="Planyavsky M."/>
            <person name="Kaupe I."/>
            <person name="Breitwieser F.P."/>
            <person name="Buerckstuemmer T."/>
            <person name="Bennett K.L."/>
            <person name="Superti-Furga G."/>
            <person name="Colinge J."/>
        </authorList>
    </citation>
    <scope>IDENTIFICATION BY MASS SPECTROMETRY [LARGE SCALE ANALYSIS]</scope>
</reference>
<reference key="6">
    <citation type="journal article" date="2012" name="Nat. Commun.">
        <title>Identification and characterization of a human mitochondrial NAD kinase.</title>
        <authorList>
            <person name="Ohashi K."/>
            <person name="Kawai S."/>
            <person name="Murata K."/>
        </authorList>
    </citation>
    <scope>FUNCTION</scope>
    <scope>CATALYTIC ACTIVITY</scope>
    <scope>SUBUNIT</scope>
    <scope>BIOPHYSICOCHEMICAL PROPERTIES</scope>
    <scope>SUBCELLULAR LOCATION</scope>
    <scope>ACTIVITY REGULATION</scope>
    <scope>TISSUE SPECIFICITY</scope>
</reference>
<reference key="7">
    <citation type="journal article" date="2014" name="Hum. Mol. Genet.">
        <title>Mitochondrial NADP(H) deficiency due to a mutation in NADK2 causes dienoyl-CoA reductase deficiency with hyperlysinemia.</title>
        <authorList>
            <person name="Houten S.M."/>
            <person name="Denis S."/>
            <person name="Te Brinke H."/>
            <person name="Jongejan A."/>
            <person name="van Kampen A.H."/>
            <person name="Bradley E.J."/>
            <person name="Baas F."/>
            <person name="Hennekam R.C."/>
            <person name="Millington D.S."/>
            <person name="Young S.P."/>
            <person name="Frazier D.M."/>
            <person name="Gucsavas-Calikoglu M."/>
            <person name="Wanders R.J."/>
        </authorList>
    </citation>
    <scope>INVOLVEMENT IN DECRD</scope>
</reference>
<reference key="8">
    <citation type="journal article" date="2014" name="J. Proteomics">
        <title>An enzyme assisted RP-RPLC approach for in-depth analysis of human liver phosphoproteome.</title>
        <authorList>
            <person name="Bian Y."/>
            <person name="Song C."/>
            <person name="Cheng K."/>
            <person name="Dong M."/>
            <person name="Wang F."/>
            <person name="Huang J."/>
            <person name="Sun D."/>
            <person name="Wang L."/>
            <person name="Ye M."/>
            <person name="Zou H."/>
        </authorList>
    </citation>
    <scope>PHOSPHORYLATION [LARGE SCALE ANALYSIS] AT SER-188 AND SER-367</scope>
    <scope>IDENTIFICATION BY MASS SPECTROMETRY [LARGE SCALE ANALYSIS]</scope>
    <source>
        <tissue>Liver</tissue>
    </source>
</reference>
<reference key="9">
    <citation type="journal article" date="2015" name="Proteomics">
        <title>N-terminome analysis of the human mitochondrial proteome.</title>
        <authorList>
            <person name="Vaca Jacome A.S."/>
            <person name="Rabilloud T."/>
            <person name="Schaeffer-Reiss C."/>
            <person name="Rompais M."/>
            <person name="Ayoub D."/>
            <person name="Lane L."/>
            <person name="Bairoch A."/>
            <person name="Van Dorsselaer A."/>
            <person name="Carapito C."/>
        </authorList>
    </citation>
    <scope>IDENTIFICATION BY MASS SPECTROMETRY [LARGE SCALE ANALYSIS]</scope>
</reference>
<gene>
    <name type="primary">NADK2</name>
    <name type="synonym">C5orf33</name>
    <name type="synonym">MNADK</name>
    <name type="synonym">NADKD1</name>
</gene>
<dbReference type="EC" id="2.7.1.23"/>
<dbReference type="EMBL" id="AK055158">
    <property type="protein sequence ID" value="BAB70864.1"/>
    <property type="molecule type" value="mRNA"/>
</dbReference>
<dbReference type="EMBL" id="AC008807">
    <property type="status" value="NOT_ANNOTATED_CDS"/>
    <property type="molecule type" value="Genomic_DNA"/>
</dbReference>
<dbReference type="EMBL" id="AC008942">
    <property type="status" value="NOT_ANNOTATED_CDS"/>
    <property type="molecule type" value="Genomic_DNA"/>
</dbReference>
<dbReference type="EMBL" id="BC045565">
    <property type="status" value="NOT_ANNOTATED_CDS"/>
    <property type="molecule type" value="mRNA"/>
</dbReference>
<dbReference type="EMBL" id="BC062567">
    <property type="protein sequence ID" value="AAH62567.1"/>
    <property type="molecule type" value="mRNA"/>
</dbReference>
<dbReference type="EMBL" id="AY360463">
    <property type="protein sequence ID" value="AAQ62967.1"/>
    <property type="molecule type" value="mRNA"/>
</dbReference>
<dbReference type="CCDS" id="CCDS3917.1">
    <molecule id="Q4G0N4-3"/>
</dbReference>
<dbReference type="CCDS" id="CCDS47197.1">
    <molecule id="Q4G0N4-1"/>
</dbReference>
<dbReference type="RefSeq" id="NP_001078880.1">
    <molecule id="Q4G0N4-1"/>
    <property type="nucleotide sequence ID" value="NM_001085411.3"/>
</dbReference>
<dbReference type="RefSeq" id="NP_001274269.1">
    <molecule id="Q4G0N4-3"/>
    <property type="nucleotide sequence ID" value="NM_001287340.2"/>
</dbReference>
<dbReference type="RefSeq" id="NP_001274270.1">
    <property type="nucleotide sequence ID" value="NM_001287341.1"/>
</dbReference>
<dbReference type="RefSeq" id="NP_694558.1">
    <molecule id="Q4G0N4-3"/>
    <property type="nucleotide sequence ID" value="NM_153013.5"/>
</dbReference>
<dbReference type="RefSeq" id="XP_047272662.1">
    <molecule id="Q4G0N4-3"/>
    <property type="nucleotide sequence ID" value="XM_047416706.1"/>
</dbReference>
<dbReference type="RefSeq" id="XP_054207570.1">
    <molecule id="Q4G0N4-3"/>
    <property type="nucleotide sequence ID" value="XM_054351595.1"/>
</dbReference>
<dbReference type="PDB" id="7N29">
    <property type="method" value="X-ray"/>
    <property type="resolution" value="2.80 A"/>
    <property type="chains" value="A/B/C/D=47-442"/>
</dbReference>
<dbReference type="PDB" id="7R4J">
    <property type="method" value="X-ray"/>
    <property type="resolution" value="2.95 A"/>
    <property type="chains" value="A=61-442"/>
</dbReference>
<dbReference type="PDB" id="7R4K">
    <property type="method" value="X-ray"/>
    <property type="resolution" value="3.33 A"/>
    <property type="chains" value="A=61-442"/>
</dbReference>
<dbReference type="PDB" id="7R4L">
    <property type="method" value="X-ray"/>
    <property type="resolution" value="2.60 A"/>
    <property type="chains" value="A=61-442"/>
</dbReference>
<dbReference type="PDB" id="7R4M">
    <property type="method" value="X-ray"/>
    <property type="resolution" value="2.29 A"/>
    <property type="chains" value="A=61-442"/>
</dbReference>
<dbReference type="PDBsum" id="7N29"/>
<dbReference type="PDBsum" id="7R4J"/>
<dbReference type="PDBsum" id="7R4K"/>
<dbReference type="PDBsum" id="7R4L"/>
<dbReference type="PDBsum" id="7R4M"/>
<dbReference type="SMR" id="Q4G0N4"/>
<dbReference type="BioGRID" id="126369">
    <property type="interactions" value="60"/>
</dbReference>
<dbReference type="FunCoup" id="Q4G0N4">
    <property type="interactions" value="2206"/>
</dbReference>
<dbReference type="IntAct" id="Q4G0N4">
    <property type="interactions" value="11"/>
</dbReference>
<dbReference type="MINT" id="Q4G0N4"/>
<dbReference type="STRING" id="9606.ENSP00000371362"/>
<dbReference type="iPTMnet" id="Q4G0N4"/>
<dbReference type="PhosphoSitePlus" id="Q4G0N4"/>
<dbReference type="SwissPalm" id="Q4G0N4"/>
<dbReference type="BioMuta" id="NADK2"/>
<dbReference type="DMDM" id="156630863"/>
<dbReference type="jPOST" id="Q4G0N4"/>
<dbReference type="MassIVE" id="Q4G0N4"/>
<dbReference type="PaxDb" id="9606-ENSP00000371362"/>
<dbReference type="PeptideAtlas" id="Q4G0N4"/>
<dbReference type="ProteomicsDB" id="62113">
    <molecule id="Q4G0N4-1"/>
</dbReference>
<dbReference type="ProteomicsDB" id="62114">
    <molecule id="Q4G0N4-2"/>
</dbReference>
<dbReference type="ProteomicsDB" id="62115">
    <molecule id="Q4G0N4-3"/>
</dbReference>
<dbReference type="Pumba" id="Q4G0N4"/>
<dbReference type="Antibodypedia" id="50834">
    <property type="antibodies" value="150 antibodies from 20 providers"/>
</dbReference>
<dbReference type="DNASU" id="133686"/>
<dbReference type="Ensembl" id="ENST00000282512.7">
    <molecule id="Q4G0N4-3"/>
    <property type="protein sequence ID" value="ENSP00000282512.3"/>
    <property type="gene ID" value="ENSG00000152620.13"/>
</dbReference>
<dbReference type="Ensembl" id="ENST00000381937.9">
    <molecule id="Q4G0N4-1"/>
    <property type="protein sequence ID" value="ENSP00000371362.4"/>
    <property type="gene ID" value="ENSG00000152620.13"/>
</dbReference>
<dbReference type="Ensembl" id="ENST00000397338.5">
    <molecule id="Q4G0N4-3"/>
    <property type="protein sequence ID" value="ENSP00000380499.1"/>
    <property type="gene ID" value="ENSG00000152620.13"/>
</dbReference>
<dbReference type="Ensembl" id="ENST00000514504.5">
    <molecule id="Q4G0N4-2"/>
    <property type="protein sequence ID" value="ENSP00000421029.1"/>
    <property type="gene ID" value="ENSG00000152620.13"/>
</dbReference>
<dbReference type="GeneID" id="133686"/>
<dbReference type="KEGG" id="hsa:133686"/>
<dbReference type="MANE-Select" id="ENST00000381937.9">
    <property type="protein sequence ID" value="ENSP00000371362.4"/>
    <property type="RefSeq nucleotide sequence ID" value="NM_001085411.3"/>
    <property type="RefSeq protein sequence ID" value="NP_001078880.1"/>
</dbReference>
<dbReference type="UCSC" id="uc003jkf.6">
    <molecule id="Q4G0N4-1"/>
    <property type="organism name" value="human"/>
</dbReference>
<dbReference type="AGR" id="HGNC:26404"/>
<dbReference type="CTD" id="133686"/>
<dbReference type="DisGeNET" id="133686"/>
<dbReference type="GeneCards" id="NADK2"/>
<dbReference type="HGNC" id="HGNC:26404">
    <property type="gene designation" value="NADK2"/>
</dbReference>
<dbReference type="HPA" id="ENSG00000152620">
    <property type="expression patterns" value="Tissue enriched (liver)"/>
</dbReference>
<dbReference type="MalaCards" id="NADK2"/>
<dbReference type="MIM" id="615787">
    <property type="type" value="gene"/>
</dbReference>
<dbReference type="MIM" id="616034">
    <property type="type" value="phenotype"/>
</dbReference>
<dbReference type="neXtProt" id="NX_Q4G0N4"/>
<dbReference type="OpenTargets" id="ENSG00000152620"/>
<dbReference type="Orphanet" id="431361">
    <property type="disease" value="Progressive encephalopathy with leukodystrophy due to DECR deficiency"/>
</dbReference>
<dbReference type="PharmGKB" id="PA162380039"/>
<dbReference type="VEuPathDB" id="HostDB:ENSG00000152620"/>
<dbReference type="eggNOG" id="KOG4180">
    <property type="taxonomic scope" value="Eukaryota"/>
</dbReference>
<dbReference type="GeneTree" id="ENSGT00390000006320"/>
<dbReference type="HOGENOM" id="CLU_039559_0_0_1"/>
<dbReference type="InParanoid" id="Q4G0N4"/>
<dbReference type="OMA" id="WHFNINK"/>
<dbReference type="OrthoDB" id="185618at2759"/>
<dbReference type="PAN-GO" id="Q4G0N4">
    <property type="GO annotations" value="3 GO annotations based on evolutionary models"/>
</dbReference>
<dbReference type="PhylomeDB" id="Q4G0N4"/>
<dbReference type="TreeFam" id="TF314077"/>
<dbReference type="BRENDA" id="2.7.1.23">
    <property type="organism ID" value="2681"/>
</dbReference>
<dbReference type="PathwayCommons" id="Q4G0N4"/>
<dbReference type="Reactome" id="R-HSA-196807">
    <property type="pathway name" value="Nicotinate metabolism"/>
</dbReference>
<dbReference type="Reactome" id="R-HSA-9837999">
    <property type="pathway name" value="Mitochondrial protein degradation"/>
</dbReference>
<dbReference type="SABIO-RK" id="Q4G0N4"/>
<dbReference type="SignaLink" id="Q4G0N4"/>
<dbReference type="BioGRID-ORCS" id="133686">
    <property type="hits" value="26 hits in 1116 CRISPR screens"/>
</dbReference>
<dbReference type="ChiTaRS" id="NADK2">
    <property type="organism name" value="human"/>
</dbReference>
<dbReference type="GenomeRNAi" id="133686"/>
<dbReference type="Pharos" id="Q4G0N4">
    <property type="development level" value="Tbio"/>
</dbReference>
<dbReference type="PRO" id="PR:Q4G0N4"/>
<dbReference type="Proteomes" id="UP000005640">
    <property type="component" value="Chromosome 5"/>
</dbReference>
<dbReference type="RNAct" id="Q4G0N4">
    <property type="molecule type" value="protein"/>
</dbReference>
<dbReference type="Bgee" id="ENSG00000152620">
    <property type="expression patterns" value="Expressed in liver and 198 other cell types or tissues"/>
</dbReference>
<dbReference type="ExpressionAtlas" id="Q4G0N4">
    <property type="expression patterns" value="baseline and differential"/>
</dbReference>
<dbReference type="GO" id="GO:0005759">
    <property type="term" value="C:mitochondrial matrix"/>
    <property type="evidence" value="ECO:0000304"/>
    <property type="project" value="Reactome"/>
</dbReference>
<dbReference type="GO" id="GO:0005739">
    <property type="term" value="C:mitochondrion"/>
    <property type="evidence" value="ECO:0000314"/>
    <property type="project" value="HPA"/>
</dbReference>
<dbReference type="GO" id="GO:0005524">
    <property type="term" value="F:ATP binding"/>
    <property type="evidence" value="ECO:0007669"/>
    <property type="project" value="UniProtKB-KW"/>
</dbReference>
<dbReference type="GO" id="GO:0003951">
    <property type="term" value="F:NAD+ kinase activity"/>
    <property type="evidence" value="ECO:0000314"/>
    <property type="project" value="UniProtKB"/>
</dbReference>
<dbReference type="GO" id="GO:0042803">
    <property type="term" value="F:protein homodimerization activity"/>
    <property type="evidence" value="ECO:0000314"/>
    <property type="project" value="UniProtKB"/>
</dbReference>
<dbReference type="GO" id="GO:0019674">
    <property type="term" value="P:NAD metabolic process"/>
    <property type="evidence" value="ECO:0000314"/>
    <property type="project" value="UniProtKB"/>
</dbReference>
<dbReference type="GO" id="GO:0006741">
    <property type="term" value="P:NADP biosynthetic process"/>
    <property type="evidence" value="ECO:0007669"/>
    <property type="project" value="InterPro"/>
</dbReference>
<dbReference type="FunFam" id="3.40.50.10330:FF:000021">
    <property type="entry name" value="NAD kinase 2, mitochondrial"/>
    <property type="match status" value="1"/>
</dbReference>
<dbReference type="Gene3D" id="3.40.50.10330">
    <property type="entry name" value="Probable inorganic polyphosphate/atp-NAD kinase, domain 1"/>
    <property type="match status" value="1"/>
</dbReference>
<dbReference type="Gene3D" id="2.60.200.30">
    <property type="entry name" value="Probable inorganic polyphosphate/atp-NAD kinase, domain 2"/>
    <property type="match status" value="1"/>
</dbReference>
<dbReference type="InterPro" id="IPR017438">
    <property type="entry name" value="ATP-NAD_kinase_N"/>
</dbReference>
<dbReference type="InterPro" id="IPR017437">
    <property type="entry name" value="ATP-NAD_kinase_PpnK-typ_C"/>
</dbReference>
<dbReference type="InterPro" id="IPR016064">
    <property type="entry name" value="NAD/diacylglycerol_kinase_sf"/>
</dbReference>
<dbReference type="InterPro" id="IPR002504">
    <property type="entry name" value="NADK"/>
</dbReference>
<dbReference type="InterPro" id="IPR012355">
    <property type="entry name" value="NADK2_mit"/>
</dbReference>
<dbReference type="PANTHER" id="PTHR13158">
    <property type="match status" value="1"/>
</dbReference>
<dbReference type="PANTHER" id="PTHR13158:SF5">
    <property type="entry name" value="NAD KINASE 2, MITOCHONDRIAL"/>
    <property type="match status" value="1"/>
</dbReference>
<dbReference type="Pfam" id="PF01513">
    <property type="entry name" value="NAD_kinase"/>
    <property type="match status" value="1"/>
</dbReference>
<dbReference type="PIRSF" id="PIRSF017565">
    <property type="entry name" value="Kin_ATP-NAD_euk"/>
    <property type="match status" value="1"/>
</dbReference>
<dbReference type="SUPFAM" id="SSF111331">
    <property type="entry name" value="NAD kinase/diacylglycerol kinase-like"/>
    <property type="match status" value="1"/>
</dbReference>
<accession>Q4G0N4</accession>
<accession>B5MC93</accession>
<accession>Q6UTX5</accession>
<accession>Q96NM0</accession>
<evidence type="ECO:0000250" key="1">
    <source>
        <dbReference type="UniProtKB" id="Q8C5H8"/>
    </source>
</evidence>
<evidence type="ECO:0000255" key="2"/>
<evidence type="ECO:0000256" key="3">
    <source>
        <dbReference type="SAM" id="MobiDB-lite"/>
    </source>
</evidence>
<evidence type="ECO:0000269" key="4">
    <source>
    </source>
</evidence>
<evidence type="ECO:0000269" key="5">
    <source>
    </source>
</evidence>
<evidence type="ECO:0000303" key="6">
    <source>
    </source>
</evidence>
<evidence type="ECO:0000303" key="7">
    <source>
    </source>
</evidence>
<evidence type="ECO:0000303" key="8">
    <source ref="4"/>
</evidence>
<evidence type="ECO:0000305" key="9"/>
<evidence type="ECO:0000305" key="10">
    <source>
    </source>
</evidence>
<evidence type="ECO:0007744" key="11">
    <source>
    </source>
</evidence>
<evidence type="ECO:0007829" key="12">
    <source>
        <dbReference type="PDB" id="7N29"/>
    </source>
</evidence>
<evidence type="ECO:0007829" key="13">
    <source>
        <dbReference type="PDB" id="7R4K"/>
    </source>
</evidence>
<evidence type="ECO:0007829" key="14">
    <source>
        <dbReference type="PDB" id="7R4M"/>
    </source>
</evidence>
<protein>
    <recommendedName>
        <fullName>NAD kinase 2, mitochondrial</fullName>
        <ecNumber>2.7.1.23</ecNumber>
    </recommendedName>
    <alternativeName>
        <fullName>Mitochondrial NAD kinase</fullName>
    </alternativeName>
    <alternativeName>
        <fullName>NAD kinase domain-containing protein 1, mitochondrial</fullName>
    </alternativeName>
</protein>
<organism>
    <name type="scientific">Homo sapiens</name>
    <name type="common">Human</name>
    <dbReference type="NCBI Taxonomy" id="9606"/>
    <lineage>
        <taxon>Eukaryota</taxon>
        <taxon>Metazoa</taxon>
        <taxon>Chordata</taxon>
        <taxon>Craniata</taxon>
        <taxon>Vertebrata</taxon>
        <taxon>Euteleostomi</taxon>
        <taxon>Mammalia</taxon>
        <taxon>Eutheria</taxon>
        <taxon>Euarchontoglires</taxon>
        <taxon>Primates</taxon>
        <taxon>Haplorrhini</taxon>
        <taxon>Catarrhini</taxon>
        <taxon>Hominidae</taxon>
        <taxon>Homo</taxon>
    </lineage>
</organism>
<feature type="transit peptide" description="Mitochondrion" evidence="2">
    <location>
        <begin position="1"/>
        <end position="62"/>
    </location>
</feature>
<feature type="chain" id="PRO_0000296292" description="NAD kinase 2, mitochondrial">
    <location>
        <begin position="63"/>
        <end position="442"/>
    </location>
</feature>
<feature type="region of interest" description="Disordered" evidence="3">
    <location>
        <begin position="24"/>
        <end position="60"/>
    </location>
</feature>
<feature type="compositionally biased region" description="Low complexity" evidence="3">
    <location>
        <begin position="24"/>
        <end position="36"/>
    </location>
</feature>
<feature type="modified residue" description="N6-acetyllysine; alternate" evidence="1">
    <location>
        <position position="76"/>
    </location>
</feature>
<feature type="modified residue" description="N6-succinyllysine; alternate" evidence="1">
    <location>
        <position position="76"/>
    </location>
</feature>
<feature type="modified residue" description="Phosphoserine" evidence="11">
    <location>
        <position position="188"/>
    </location>
</feature>
<feature type="modified residue" description="N6-succinyllysine" evidence="1">
    <location>
        <position position="302"/>
    </location>
</feature>
<feature type="modified residue" description="N6-acetyllysine; alternate" evidence="1">
    <location>
        <position position="317"/>
    </location>
</feature>
<feature type="modified residue" description="N6-succinyllysine; alternate" evidence="1">
    <location>
        <position position="317"/>
    </location>
</feature>
<feature type="modified residue" description="Phosphoserine" evidence="11">
    <location>
        <position position="367"/>
    </location>
</feature>
<feature type="modified residue" description="N6-acetyllysine" evidence="1">
    <location>
        <position position="397"/>
    </location>
</feature>
<feature type="splice variant" id="VSP_027192" description="In isoform 3." evidence="6 7">
    <location>
        <begin position="1"/>
        <end position="163"/>
    </location>
</feature>
<feature type="splice variant" id="VSP_027193" description="In isoform 2." evidence="8">
    <location>
        <begin position="288"/>
        <end position="319"/>
    </location>
</feature>
<feature type="strand" evidence="12">
    <location>
        <begin position="59"/>
        <end position="61"/>
    </location>
</feature>
<feature type="strand" evidence="14">
    <location>
        <begin position="69"/>
        <end position="75"/>
    </location>
</feature>
<feature type="helix" evidence="14">
    <location>
        <begin position="79"/>
        <end position="84"/>
    </location>
</feature>
<feature type="turn" evidence="12">
    <location>
        <begin position="86"/>
        <end position="91"/>
    </location>
</feature>
<feature type="helix" evidence="12">
    <location>
        <begin position="95"/>
        <end position="100"/>
    </location>
</feature>
<feature type="strand" evidence="14">
    <location>
        <begin position="105"/>
        <end position="107"/>
    </location>
</feature>
<feature type="helix" evidence="14">
    <location>
        <begin position="109"/>
        <end position="131"/>
    </location>
</feature>
<feature type="strand" evidence="14">
    <location>
        <begin position="135"/>
        <end position="140"/>
    </location>
</feature>
<feature type="helix" evidence="14">
    <location>
        <begin position="141"/>
        <end position="143"/>
    </location>
</feature>
<feature type="helix" evidence="14">
    <location>
        <begin position="146"/>
        <end position="151"/>
    </location>
</feature>
<feature type="strand" evidence="14">
    <location>
        <begin position="153"/>
        <end position="160"/>
    </location>
</feature>
<feature type="helix" evidence="14">
    <location>
        <begin position="161"/>
        <end position="169"/>
    </location>
</feature>
<feature type="strand" evidence="14">
    <location>
        <begin position="178"/>
        <end position="183"/>
    </location>
</feature>
<feature type="turn" evidence="14">
    <location>
        <begin position="185"/>
        <end position="187"/>
    </location>
</feature>
<feature type="helix" evidence="14">
    <location>
        <begin position="196"/>
        <end position="199"/>
    </location>
</feature>
<feature type="helix" evidence="14">
    <location>
        <begin position="202"/>
        <end position="210"/>
    </location>
</feature>
<feature type="strand" evidence="14">
    <location>
        <begin position="214"/>
        <end position="219"/>
    </location>
</feature>
<feature type="strand" evidence="14">
    <location>
        <begin position="222"/>
        <end position="230"/>
    </location>
</feature>
<feature type="strand" evidence="13">
    <location>
        <begin position="232"/>
        <end position="237"/>
    </location>
</feature>
<feature type="helix" evidence="12">
    <location>
        <begin position="238"/>
        <end position="240"/>
    </location>
</feature>
<feature type="strand" evidence="14">
    <location>
        <begin position="265"/>
        <end position="284"/>
    </location>
</feature>
<feature type="strand" evidence="14">
    <location>
        <begin position="289"/>
        <end position="295"/>
    </location>
</feature>
<feature type="strand" evidence="14">
    <location>
        <begin position="301"/>
        <end position="306"/>
    </location>
</feature>
<feature type="strand" evidence="14">
    <location>
        <begin position="308"/>
        <end position="311"/>
    </location>
</feature>
<feature type="helix" evidence="14">
    <location>
        <begin position="314"/>
        <end position="317"/>
    </location>
</feature>
<feature type="helix" evidence="14">
    <location>
        <begin position="319"/>
        <end position="324"/>
    </location>
</feature>
<feature type="helix" evidence="14">
    <location>
        <begin position="328"/>
        <end position="340"/>
    </location>
</feature>
<feature type="helix" evidence="14">
    <location>
        <begin position="350"/>
        <end position="362"/>
    </location>
</feature>
<feature type="strand" evidence="14">
    <location>
        <begin position="373"/>
        <end position="377"/>
    </location>
</feature>
<feature type="turn" evidence="14">
    <location>
        <begin position="383"/>
        <end position="385"/>
    </location>
</feature>
<feature type="strand" evidence="14">
    <location>
        <begin position="391"/>
        <end position="402"/>
    </location>
</feature>
<feature type="strand" evidence="14">
    <location>
        <begin position="405"/>
        <end position="411"/>
    </location>
</feature>
<feature type="turn" evidence="14">
    <location>
        <begin position="412"/>
        <end position="414"/>
    </location>
</feature>
<feature type="strand" evidence="14">
    <location>
        <begin position="415"/>
        <end position="418"/>
    </location>
</feature>
<feature type="strand" evidence="14">
    <location>
        <begin position="423"/>
        <end position="429"/>
    </location>
</feature>
<feature type="helix" evidence="14">
    <location>
        <begin position="431"/>
        <end position="433"/>
    </location>
</feature>
<feature type="strand" evidence="14">
    <location>
        <begin position="435"/>
        <end position="439"/>
    </location>
</feature>
<proteinExistence type="evidence at protein level"/>
<keyword id="KW-0002">3D-structure</keyword>
<keyword id="KW-0007">Acetylation</keyword>
<keyword id="KW-0025">Alternative splicing</keyword>
<keyword id="KW-0067">ATP-binding</keyword>
<keyword id="KW-0418">Kinase</keyword>
<keyword id="KW-0496">Mitochondrion</keyword>
<keyword id="KW-0520">NAD</keyword>
<keyword id="KW-0521">NADP</keyword>
<keyword id="KW-0547">Nucleotide-binding</keyword>
<keyword id="KW-0597">Phosphoprotein</keyword>
<keyword id="KW-1267">Proteomics identification</keyword>
<keyword id="KW-1185">Reference proteome</keyword>
<keyword id="KW-0808">Transferase</keyword>
<keyword id="KW-0809">Transit peptide</keyword>
<comment type="function">
    <text evidence="4">Mitochondrial NAD(+) kinase that phosphorylates NAD(+) to yield NADP(+). Can use both ATP or inorganic polyphosphate as the phosphoryl donor. Also has weak NADH kinase activity in vitro; however NADH kinase activity is much weaker than the NAD(+) kinase activity and may not be relevant in vivo.</text>
</comment>
<comment type="catalytic activity">
    <reaction evidence="4">
        <text>NAD(+) + ATP = ADP + NADP(+) + H(+)</text>
        <dbReference type="Rhea" id="RHEA:18629"/>
        <dbReference type="ChEBI" id="CHEBI:15378"/>
        <dbReference type="ChEBI" id="CHEBI:30616"/>
        <dbReference type="ChEBI" id="CHEBI:57540"/>
        <dbReference type="ChEBI" id="CHEBI:58349"/>
        <dbReference type="ChEBI" id="CHEBI:456216"/>
        <dbReference type="EC" id="2.7.1.23"/>
    </reaction>
</comment>
<comment type="activity regulation">
    <text evidence="4">Inhibited by NADH, NADPH and NADP(+).</text>
</comment>
<comment type="biophysicochemical properties">
    <kinetics>
        <KM evidence="4">0.022 mM for NAD(+)</KM>
        <KM evidence="4">1.7 mM for ATP</KM>
        <KM evidence="4">1.2 mM for tetrapolyphosphate</KM>
        <Vmax evidence="4">0.091 umol/min/mg enzyme</Vmax>
    </kinetics>
</comment>
<comment type="subunit">
    <text evidence="10">Homodimer.</text>
</comment>
<comment type="subcellular location">
    <subcellularLocation>
        <location evidence="4">Mitochondrion</location>
    </subcellularLocation>
</comment>
<comment type="alternative products">
    <event type="alternative splicing"/>
    <isoform>
        <id>Q4G0N4-1</id>
        <name>1</name>
        <sequence type="displayed"/>
    </isoform>
    <isoform>
        <id>Q4G0N4-2</id>
        <name>2</name>
        <sequence type="described" ref="VSP_027193"/>
    </isoform>
    <isoform>
        <id>Q4G0N4-3</id>
        <name>3</name>
        <sequence type="described" ref="VSP_027192"/>
    </isoform>
</comment>
<comment type="tissue specificity">
    <text evidence="4">Widely expressed.</text>
</comment>
<comment type="disease" evidence="5">
    <disease id="DI-04240">
        <name>2,4-dienoyl-CoA reductase deficiency</name>
        <acronym>DECRD</acronym>
        <description>A rare, autosomal recessive, inborn error of polyunsaturated fatty acids and lysine metabolism, resulting in mitochondrial dysfunction. Affected individuals have a severe encephalopathy with neurologic and metabolic abnormalities beginning in early infancy. Laboratory studies show increased C10:2 carnitine levels and hyperlysinemia.</description>
        <dbReference type="MIM" id="616034"/>
    </disease>
    <text>The disease is caused by variants affecting the gene represented in this entry.</text>
</comment>
<comment type="similarity">
    <text evidence="9">Belongs to the NAD kinase family.</text>
</comment>
<name>NADK2_HUMAN</name>
<sequence>MTCYRGFLLGSCCRVAGGRAAALRGPGAGGPAARPRLGGDGGGRRHLGQGQPRELAGCGSRADGGFRPSRVVVVAKTTRYEFEQQRYRYAELSEEDLKQLLALKGSSYSGLLERHHIHTKNVEHIIDSLRNEGIEVRLVKRREYDEETVRWADAVIAAGGDGTMLLAASKVLDRLKPVIGVNTDPERSEGHLCLPVRYTHSFPEALQKFYRGEFRWLWRQRIRLYLEGTGINPVPVDLHEQQLSLNQHNRALNIERAHDERSEASGPQLLPVRALNEVFIGESLSSRASYYEISVDDGPWEKQKSSGLNLCTGTGSKAWSFNINRVATQAVEDVLNIAKRQGNLSLPLNRELVEKVTNEYNESLLYSPEEPKILFSIREPIANRVFSSSRQRCFSSKVCVRSRCWDACMVVDGGTSFEFNDGAIASMMINKEDELRTVLLEQ</sequence>